<gene>
    <name evidence="1" type="primary">rsbW</name>
    <name type="ordered locus">SAR2153</name>
</gene>
<sequence>MQSKEDFIEMRVPASAEYVSLIRLTLSGVFSRAGATYDDIEDAKIAVSEAVTNAVKHAYKEKNNVGIINIYFEILEDKIKIVISDKGDSFDYETTKSKIGPYDKDENIDFLREGGLGLFLIESLMDEVTVYKESGVTISMTKYIKKEQVRNNGERVEIS</sequence>
<name>RSBW_STAAR</name>
<evidence type="ECO:0000255" key="1">
    <source>
        <dbReference type="HAMAP-Rule" id="MF_00638"/>
    </source>
</evidence>
<accession>Q6GF08</accession>
<organism>
    <name type="scientific">Staphylococcus aureus (strain MRSA252)</name>
    <dbReference type="NCBI Taxonomy" id="282458"/>
    <lineage>
        <taxon>Bacteria</taxon>
        <taxon>Bacillati</taxon>
        <taxon>Bacillota</taxon>
        <taxon>Bacilli</taxon>
        <taxon>Bacillales</taxon>
        <taxon>Staphylococcaceae</taxon>
        <taxon>Staphylococcus</taxon>
    </lineage>
</organism>
<dbReference type="EC" id="2.7.11.1" evidence="1"/>
<dbReference type="EMBL" id="BX571856">
    <property type="protein sequence ID" value="CAG41134.1"/>
    <property type="molecule type" value="Genomic_DNA"/>
</dbReference>
<dbReference type="RefSeq" id="WP_001190825.1">
    <property type="nucleotide sequence ID" value="NC_002952.2"/>
</dbReference>
<dbReference type="SMR" id="Q6GF08"/>
<dbReference type="KEGG" id="sar:SAR2153"/>
<dbReference type="HOGENOM" id="CLU_090336_11_1_9"/>
<dbReference type="Proteomes" id="UP000000596">
    <property type="component" value="Chromosome"/>
</dbReference>
<dbReference type="GO" id="GO:0005524">
    <property type="term" value="F:ATP binding"/>
    <property type="evidence" value="ECO:0007669"/>
    <property type="project" value="UniProtKB-KW"/>
</dbReference>
<dbReference type="GO" id="GO:0106310">
    <property type="term" value="F:protein serine kinase activity"/>
    <property type="evidence" value="ECO:0007669"/>
    <property type="project" value="RHEA"/>
</dbReference>
<dbReference type="GO" id="GO:0004674">
    <property type="term" value="F:protein serine/threonine kinase activity"/>
    <property type="evidence" value="ECO:0007669"/>
    <property type="project" value="UniProtKB-KW"/>
</dbReference>
<dbReference type="GO" id="GO:0016989">
    <property type="term" value="F:sigma factor antagonist activity"/>
    <property type="evidence" value="ECO:0007669"/>
    <property type="project" value="InterPro"/>
</dbReference>
<dbReference type="CDD" id="cd16936">
    <property type="entry name" value="HATPase_RsbW-like"/>
    <property type="match status" value="1"/>
</dbReference>
<dbReference type="Gene3D" id="3.30.565.10">
    <property type="entry name" value="Histidine kinase-like ATPase, C-terminal domain"/>
    <property type="match status" value="1"/>
</dbReference>
<dbReference type="HAMAP" id="MF_00638">
    <property type="entry name" value="Anti_sigma_B"/>
    <property type="match status" value="1"/>
</dbReference>
<dbReference type="InterPro" id="IPR050267">
    <property type="entry name" value="Anti-sigma-factor_SerPK"/>
</dbReference>
<dbReference type="InterPro" id="IPR036890">
    <property type="entry name" value="HATPase_C_sf"/>
</dbReference>
<dbReference type="InterPro" id="IPR010193">
    <property type="entry name" value="RsbW"/>
</dbReference>
<dbReference type="NCBIfam" id="NF003144">
    <property type="entry name" value="PRK04069.1"/>
    <property type="match status" value="1"/>
</dbReference>
<dbReference type="NCBIfam" id="TIGR01924">
    <property type="entry name" value="rsbW_low_gc"/>
    <property type="match status" value="1"/>
</dbReference>
<dbReference type="PANTHER" id="PTHR35526">
    <property type="entry name" value="ANTI-SIGMA-F FACTOR RSBW-RELATED"/>
    <property type="match status" value="1"/>
</dbReference>
<dbReference type="PANTHER" id="PTHR35526:SF9">
    <property type="entry name" value="SERINE-PROTEIN KINASE RSBW"/>
    <property type="match status" value="1"/>
</dbReference>
<dbReference type="Pfam" id="PF13581">
    <property type="entry name" value="HATPase_c_2"/>
    <property type="match status" value="1"/>
</dbReference>
<dbReference type="SUPFAM" id="SSF55874">
    <property type="entry name" value="ATPase domain of HSP90 chaperone/DNA topoisomerase II/histidine kinase"/>
    <property type="match status" value="1"/>
</dbReference>
<comment type="function">
    <text evidence="1">Negative regulator of sigma-B activity. Phosphorylates and inactivates its specific antagonist protein, RsbV. Upon phosphorylation of RsbV, RsbW is released and binds to sigma-B, thereby blocking its ability to form an RNA polymerase holoenzyme (E-sigma-B).</text>
</comment>
<comment type="catalytic activity">
    <reaction evidence="1">
        <text>L-seryl-[protein] + ATP = O-phospho-L-seryl-[protein] + ADP + H(+)</text>
        <dbReference type="Rhea" id="RHEA:17989"/>
        <dbReference type="Rhea" id="RHEA-COMP:9863"/>
        <dbReference type="Rhea" id="RHEA-COMP:11604"/>
        <dbReference type="ChEBI" id="CHEBI:15378"/>
        <dbReference type="ChEBI" id="CHEBI:29999"/>
        <dbReference type="ChEBI" id="CHEBI:30616"/>
        <dbReference type="ChEBI" id="CHEBI:83421"/>
        <dbReference type="ChEBI" id="CHEBI:456216"/>
        <dbReference type="EC" id="2.7.11.1"/>
    </reaction>
</comment>
<comment type="catalytic activity">
    <reaction evidence="1">
        <text>L-threonyl-[protein] + ATP = O-phospho-L-threonyl-[protein] + ADP + H(+)</text>
        <dbReference type="Rhea" id="RHEA:46608"/>
        <dbReference type="Rhea" id="RHEA-COMP:11060"/>
        <dbReference type="Rhea" id="RHEA-COMP:11605"/>
        <dbReference type="ChEBI" id="CHEBI:15378"/>
        <dbReference type="ChEBI" id="CHEBI:30013"/>
        <dbReference type="ChEBI" id="CHEBI:30616"/>
        <dbReference type="ChEBI" id="CHEBI:61977"/>
        <dbReference type="ChEBI" id="CHEBI:456216"/>
        <dbReference type="EC" id="2.7.11.1"/>
    </reaction>
</comment>
<comment type="similarity">
    <text evidence="1">Belongs to the anti-sigma-factor family.</text>
</comment>
<proteinExistence type="inferred from homology"/>
<protein>
    <recommendedName>
        <fullName evidence="1">Serine-protein kinase RsbW</fullName>
        <ecNumber evidence="1">2.7.11.1</ecNumber>
    </recommendedName>
    <alternativeName>
        <fullName evidence="1">Anti-sigma-B factor</fullName>
    </alternativeName>
    <alternativeName>
        <fullName evidence="1">Sigma-B negative effector RsbW</fullName>
    </alternativeName>
</protein>
<feature type="chain" id="PRO_0000203540" description="Serine-protein kinase RsbW">
    <location>
        <begin position="1"/>
        <end position="159"/>
    </location>
</feature>
<keyword id="KW-0067">ATP-binding</keyword>
<keyword id="KW-0418">Kinase</keyword>
<keyword id="KW-0547">Nucleotide-binding</keyword>
<keyword id="KW-0723">Serine/threonine-protein kinase</keyword>
<keyword id="KW-0808">Transferase</keyword>
<reference key="1">
    <citation type="journal article" date="2004" name="Proc. Natl. Acad. Sci. U.S.A.">
        <title>Complete genomes of two clinical Staphylococcus aureus strains: evidence for the rapid evolution of virulence and drug resistance.</title>
        <authorList>
            <person name="Holden M.T.G."/>
            <person name="Feil E.J."/>
            <person name="Lindsay J.A."/>
            <person name="Peacock S.J."/>
            <person name="Day N.P.J."/>
            <person name="Enright M.C."/>
            <person name="Foster T.J."/>
            <person name="Moore C.E."/>
            <person name="Hurst L."/>
            <person name="Atkin R."/>
            <person name="Barron A."/>
            <person name="Bason N."/>
            <person name="Bentley S.D."/>
            <person name="Chillingworth C."/>
            <person name="Chillingworth T."/>
            <person name="Churcher C."/>
            <person name="Clark L."/>
            <person name="Corton C."/>
            <person name="Cronin A."/>
            <person name="Doggett J."/>
            <person name="Dowd L."/>
            <person name="Feltwell T."/>
            <person name="Hance Z."/>
            <person name="Harris B."/>
            <person name="Hauser H."/>
            <person name="Holroyd S."/>
            <person name="Jagels K."/>
            <person name="James K.D."/>
            <person name="Lennard N."/>
            <person name="Line A."/>
            <person name="Mayes R."/>
            <person name="Moule S."/>
            <person name="Mungall K."/>
            <person name="Ormond D."/>
            <person name="Quail M.A."/>
            <person name="Rabbinowitsch E."/>
            <person name="Rutherford K.M."/>
            <person name="Sanders M."/>
            <person name="Sharp S."/>
            <person name="Simmonds M."/>
            <person name="Stevens K."/>
            <person name="Whitehead S."/>
            <person name="Barrell B.G."/>
            <person name="Spratt B.G."/>
            <person name="Parkhill J."/>
        </authorList>
    </citation>
    <scope>NUCLEOTIDE SEQUENCE [LARGE SCALE GENOMIC DNA]</scope>
    <source>
        <strain>MRSA252</strain>
    </source>
</reference>